<proteinExistence type="evidence at transcript level"/>
<evidence type="ECO:0000250" key="1">
    <source>
        <dbReference type="UniProtKB" id="Q5PP51"/>
    </source>
</evidence>
<evidence type="ECO:0000269" key="2">
    <source>
    </source>
</evidence>
<evidence type="ECO:0000303" key="3">
    <source>
    </source>
</evidence>
<evidence type="ECO:0000305" key="4"/>
<evidence type="ECO:0000305" key="5">
    <source>
    </source>
</evidence>
<evidence type="ECO:0000312" key="6">
    <source>
        <dbReference type="Araport" id="AT3G48620"/>
    </source>
</evidence>
<evidence type="ECO:0000312" key="7">
    <source>
        <dbReference type="EMBL" id="CAB62351.1"/>
    </source>
</evidence>
<gene>
    <name evidence="3" type="primary">P36</name>
    <name evidence="6" type="ordered locus">At3g48620</name>
    <name evidence="7" type="ORF">T8P19.130</name>
</gene>
<reference key="1">
    <citation type="journal article" date="2000" name="Nature">
        <title>Sequence and analysis of chromosome 3 of the plant Arabidopsis thaliana.</title>
        <authorList>
            <person name="Salanoubat M."/>
            <person name="Lemcke K."/>
            <person name="Rieger M."/>
            <person name="Ansorge W."/>
            <person name="Unseld M."/>
            <person name="Fartmann B."/>
            <person name="Valle G."/>
            <person name="Bloecker H."/>
            <person name="Perez-Alonso M."/>
            <person name="Obermaier B."/>
            <person name="Delseny M."/>
            <person name="Boutry M."/>
            <person name="Grivell L.A."/>
            <person name="Mache R."/>
            <person name="Puigdomenech P."/>
            <person name="De Simone V."/>
            <person name="Choisne N."/>
            <person name="Artiguenave F."/>
            <person name="Robert C."/>
            <person name="Brottier P."/>
            <person name="Wincker P."/>
            <person name="Cattolico L."/>
            <person name="Weissenbach J."/>
            <person name="Saurin W."/>
            <person name="Quetier F."/>
            <person name="Schaefer M."/>
            <person name="Mueller-Auer S."/>
            <person name="Gabel C."/>
            <person name="Fuchs M."/>
            <person name="Benes V."/>
            <person name="Wurmbach E."/>
            <person name="Drzonek H."/>
            <person name="Erfle H."/>
            <person name="Jordan N."/>
            <person name="Bangert S."/>
            <person name="Wiedelmann R."/>
            <person name="Kranz H."/>
            <person name="Voss H."/>
            <person name="Holland R."/>
            <person name="Brandt P."/>
            <person name="Nyakatura G."/>
            <person name="Vezzi A."/>
            <person name="D'Angelo M."/>
            <person name="Pallavicini A."/>
            <person name="Toppo S."/>
            <person name="Simionati B."/>
            <person name="Conrad A."/>
            <person name="Hornischer K."/>
            <person name="Kauer G."/>
            <person name="Loehnert T.-H."/>
            <person name="Nordsiek G."/>
            <person name="Reichelt J."/>
            <person name="Scharfe M."/>
            <person name="Schoen O."/>
            <person name="Bargues M."/>
            <person name="Terol J."/>
            <person name="Climent J."/>
            <person name="Navarro P."/>
            <person name="Collado C."/>
            <person name="Perez-Perez A."/>
            <person name="Ottenwaelder B."/>
            <person name="Duchemin D."/>
            <person name="Cooke R."/>
            <person name="Laudie M."/>
            <person name="Berger-Llauro C."/>
            <person name="Purnelle B."/>
            <person name="Masuy D."/>
            <person name="de Haan M."/>
            <person name="Maarse A.C."/>
            <person name="Alcaraz J.-P."/>
            <person name="Cottet A."/>
            <person name="Casacuberta E."/>
            <person name="Monfort A."/>
            <person name="Argiriou A."/>
            <person name="Flores M."/>
            <person name="Liguori R."/>
            <person name="Vitale D."/>
            <person name="Mannhaupt G."/>
            <person name="Haase D."/>
            <person name="Schoof H."/>
            <person name="Rudd S."/>
            <person name="Zaccaria P."/>
            <person name="Mewes H.-W."/>
            <person name="Mayer K.F.X."/>
            <person name="Kaul S."/>
            <person name="Town C.D."/>
            <person name="Koo H.L."/>
            <person name="Tallon L.J."/>
            <person name="Jenkins J."/>
            <person name="Rooney T."/>
            <person name="Rizzo M."/>
            <person name="Walts A."/>
            <person name="Utterback T."/>
            <person name="Fujii C.Y."/>
            <person name="Shea T.P."/>
            <person name="Creasy T.H."/>
            <person name="Haas B."/>
            <person name="Maiti R."/>
            <person name="Wu D."/>
            <person name="Peterson J."/>
            <person name="Van Aken S."/>
            <person name="Pai G."/>
            <person name="Militscher J."/>
            <person name="Sellers P."/>
            <person name="Gill J.E."/>
            <person name="Feldblyum T.V."/>
            <person name="Preuss D."/>
            <person name="Lin X."/>
            <person name="Nierman W.C."/>
            <person name="Salzberg S.L."/>
            <person name="White O."/>
            <person name="Venter J.C."/>
            <person name="Fraser C.M."/>
            <person name="Kaneko T."/>
            <person name="Nakamura Y."/>
            <person name="Sato S."/>
            <person name="Kato T."/>
            <person name="Asamizu E."/>
            <person name="Sasamoto S."/>
            <person name="Kimura T."/>
            <person name="Idesawa K."/>
            <person name="Kawashima K."/>
            <person name="Kishida Y."/>
            <person name="Kiyokawa C."/>
            <person name="Kohara M."/>
            <person name="Matsumoto M."/>
            <person name="Matsuno A."/>
            <person name="Muraki A."/>
            <person name="Nakayama S."/>
            <person name="Nakazaki N."/>
            <person name="Shinpo S."/>
            <person name="Takeuchi C."/>
            <person name="Wada T."/>
            <person name="Watanabe A."/>
            <person name="Yamada M."/>
            <person name="Yasuda M."/>
            <person name="Tabata S."/>
        </authorList>
    </citation>
    <scope>NUCLEOTIDE SEQUENCE [LARGE SCALE GENOMIC DNA]</scope>
    <source>
        <strain>cv. Columbia</strain>
    </source>
</reference>
<reference key="2">
    <citation type="journal article" date="2017" name="Plant J.">
        <title>Araport11: a complete reannotation of the Arabidopsis thaliana reference genome.</title>
        <authorList>
            <person name="Cheng C.Y."/>
            <person name="Krishnakumar V."/>
            <person name="Chan A.P."/>
            <person name="Thibaud-Nissen F."/>
            <person name="Schobel S."/>
            <person name="Town C.D."/>
        </authorList>
    </citation>
    <scope>GENOME REANNOTATION</scope>
    <source>
        <strain>cv. Columbia</strain>
    </source>
</reference>
<reference key="3">
    <citation type="journal article" date="2015" name="J. Plant Res.">
        <title>The Omp85-type outer membrane protein p36 of Arabidopsis thaliana evolved by recent gene duplication.</title>
        <authorList>
            <person name="Nicolaisen K."/>
            <person name="Missbach S."/>
            <person name="Hsueh Y.C."/>
            <person name="Ertel F."/>
            <person name="Fulgosi H."/>
            <person name="Sommer M.S."/>
            <person name="Schleiff E."/>
        </authorList>
    </citation>
    <scope>FUNCTION</scope>
    <scope>TISSUE SPECIFICITY</scope>
    <scope>DISRUPTION PHENOTYPE</scope>
</reference>
<accession>F4JF35</accession>
<accession>Q9SMN7</accession>
<protein>
    <recommendedName>
        <fullName evidence="4">Outer envelope protein 36, chloroplastic</fullName>
    </recommendedName>
</protein>
<feature type="chain" id="PRO_0000446977" description="Outer envelope protein 36, chloroplastic">
    <location>
        <begin position="1"/>
        <end position="321"/>
    </location>
</feature>
<keyword id="KW-0150">Chloroplast</keyword>
<keyword id="KW-0472">Membrane</keyword>
<keyword id="KW-0934">Plastid</keyword>
<keyword id="KW-1002">Plastid outer membrane</keyword>
<keyword id="KW-1185">Reference proteome</keyword>
<name>OEP36_ARATH</name>
<comment type="function">
    <text evidence="5">May play a role during plastid development.</text>
</comment>
<comment type="subcellular location">
    <subcellularLocation>
        <location evidence="1">Plastid</location>
        <location evidence="1">Chloroplast outer membrane</location>
    </subcellularLocation>
</comment>
<comment type="tissue specificity">
    <text evidence="2">Expressed in germinating seeds.</text>
</comment>
<comment type="disruption phenotype">
    <text evidence="2">Reduced rosette size, delayed senescence, and reduced starch accumulation in chloroplasts of sepals.</text>
</comment>
<comment type="similarity">
    <text evidence="4">Belongs to the OEP80 (TC 1.B.33.2) family.</text>
</comment>
<comment type="sequence caution" evidence="4">
    <conflict type="erroneous gene model prediction">
        <sequence resource="EMBL-CDS" id="CAB62351"/>
    </conflict>
</comment>
<dbReference type="EMBL" id="AL133315">
    <property type="protein sequence ID" value="CAB62351.1"/>
    <property type="status" value="ALT_SEQ"/>
    <property type="molecule type" value="Genomic_DNA"/>
</dbReference>
<dbReference type="EMBL" id="CP002686">
    <property type="protein sequence ID" value="AEE78438.1"/>
    <property type="molecule type" value="Genomic_DNA"/>
</dbReference>
<dbReference type="PIR" id="T46206">
    <property type="entry name" value="T46206"/>
</dbReference>
<dbReference type="RefSeq" id="NP_190431.5">
    <property type="nucleotide sequence ID" value="NM_114721.6"/>
</dbReference>
<dbReference type="STRING" id="3702.F4JF35"/>
<dbReference type="PaxDb" id="3702-AT3G48620.1"/>
<dbReference type="EnsemblPlants" id="AT3G48620.1">
    <property type="protein sequence ID" value="AT3G48620.1"/>
    <property type="gene ID" value="AT3G48620"/>
</dbReference>
<dbReference type="GeneID" id="824022"/>
<dbReference type="Gramene" id="AT3G48620.1">
    <property type="protein sequence ID" value="AT3G48620.1"/>
    <property type="gene ID" value="AT3G48620"/>
</dbReference>
<dbReference type="KEGG" id="ath:AT3G48620"/>
<dbReference type="Araport" id="AT3G48620"/>
<dbReference type="TAIR" id="AT3G48620"/>
<dbReference type="eggNOG" id="ENOG502QT7K">
    <property type="taxonomic scope" value="Eukaryota"/>
</dbReference>
<dbReference type="HOGENOM" id="CLU_078932_0_0_1"/>
<dbReference type="InParanoid" id="F4JF35"/>
<dbReference type="OMA" id="GRISYNM"/>
<dbReference type="PRO" id="PR:F4JF35"/>
<dbReference type="Proteomes" id="UP000006548">
    <property type="component" value="Chromosome 3"/>
</dbReference>
<dbReference type="ExpressionAtlas" id="F4JF35">
    <property type="expression patterns" value="baseline and differential"/>
</dbReference>
<dbReference type="GO" id="GO:0009707">
    <property type="term" value="C:chloroplast outer membrane"/>
    <property type="evidence" value="ECO:0007669"/>
    <property type="project" value="UniProtKB-SubCell"/>
</dbReference>
<dbReference type="Gene3D" id="2.40.160.50">
    <property type="entry name" value="membrane protein fhac: a member of the omp85/tpsb transporter family"/>
    <property type="match status" value="1"/>
</dbReference>
<dbReference type="InterPro" id="IPR000184">
    <property type="entry name" value="Bac_surfAg_D15"/>
</dbReference>
<dbReference type="InterPro" id="IPR039910">
    <property type="entry name" value="D15-like"/>
</dbReference>
<dbReference type="PANTHER" id="PTHR12815:SF40">
    <property type="entry name" value="OUTER ENVELOPE PROTEIN 36, CHLOROPLASTIC-RELATED"/>
    <property type="match status" value="1"/>
</dbReference>
<dbReference type="PANTHER" id="PTHR12815">
    <property type="entry name" value="SORTING AND ASSEMBLY MACHINERY SAMM50 PROTEIN FAMILY MEMBER"/>
    <property type="match status" value="1"/>
</dbReference>
<dbReference type="Pfam" id="PF01103">
    <property type="entry name" value="Omp85"/>
    <property type="match status" value="1"/>
</dbReference>
<sequence>MFHGIKGCMIPMYWWLLGDLDLNGVRNSASSYSGGVNLSKLAVGLDLSEPASSKWSSTTSVKFEVPGHYLLQTLYMCVRLTMTDGRYQRSGRISYNMQNSLLCSGNTHDSMVVLKQESRFAKATDQGLSHFSMQIEQGIPVVSNWLIFNRFKFVASKGVRFGPAFPLASLTGGSIVGDMTPYQAFAIGGLGSVRGYGEVAVGSGRSCLVANTELANKMTEGTIFLDCGTDLGSSRLVPVSSLYLLRTRTIKKLLRHENDKAVAELVSGNPSLRQGKPGFGYGFGYGLRFKSPLGHLQVDYAMNAFNQKTLYFGITNLASST</sequence>
<organism>
    <name type="scientific">Arabidopsis thaliana</name>
    <name type="common">Mouse-ear cress</name>
    <dbReference type="NCBI Taxonomy" id="3702"/>
    <lineage>
        <taxon>Eukaryota</taxon>
        <taxon>Viridiplantae</taxon>
        <taxon>Streptophyta</taxon>
        <taxon>Embryophyta</taxon>
        <taxon>Tracheophyta</taxon>
        <taxon>Spermatophyta</taxon>
        <taxon>Magnoliopsida</taxon>
        <taxon>eudicotyledons</taxon>
        <taxon>Gunneridae</taxon>
        <taxon>Pentapetalae</taxon>
        <taxon>rosids</taxon>
        <taxon>malvids</taxon>
        <taxon>Brassicales</taxon>
        <taxon>Brassicaceae</taxon>
        <taxon>Camelineae</taxon>
        <taxon>Arabidopsis</taxon>
    </lineage>
</organism>